<evidence type="ECO:0000250" key="1">
    <source>
        <dbReference type="UniProtKB" id="A0A0B4JDK1"/>
    </source>
</evidence>
<evidence type="ECO:0000250" key="2">
    <source>
        <dbReference type="UniProtKB" id="Q9C7F7"/>
    </source>
</evidence>
<evidence type="ECO:0000255" key="3"/>
<evidence type="ECO:0000255" key="4">
    <source>
        <dbReference type="PROSITE-ProRule" id="PRU00498"/>
    </source>
</evidence>
<evidence type="ECO:0000303" key="5">
    <source>
    </source>
</evidence>
<evidence type="ECO:0000305" key="6"/>
<evidence type="ECO:0000312" key="7">
    <source>
        <dbReference type="Araport" id="AT4G22640"/>
    </source>
</evidence>
<evidence type="ECO:0000312" key="8">
    <source>
        <dbReference type="EMBL" id="CAA16549.1"/>
    </source>
</evidence>
<feature type="signal peptide" evidence="3">
    <location>
        <begin position="1"/>
        <end position="27"/>
    </location>
</feature>
<feature type="chain" id="PRO_5015096782" description="Non-specific lipid transfer protein GPI-anchored 33" evidence="3">
    <location>
        <begin position="28"/>
        <end position="115"/>
    </location>
</feature>
<feature type="propeptide" id="PRO_0000451662" description="Removed in mature form" evidence="3">
    <location>
        <begin position="116"/>
        <end position="140"/>
    </location>
</feature>
<feature type="lipid moiety-binding region" description="GPI-anchor amidated glycine" evidence="3">
    <location>
        <position position="115"/>
    </location>
</feature>
<feature type="glycosylation site" description="N-linked (GlcNAc...) asparagine" evidence="4">
    <location>
        <position position="91"/>
    </location>
</feature>
<feature type="disulfide bond" evidence="1">
    <location>
        <begin position="40"/>
        <end position="80"/>
    </location>
</feature>
<feature type="disulfide bond" evidence="1">
    <location>
        <begin position="52"/>
        <end position="64"/>
    </location>
</feature>
<feature type="disulfide bond" evidence="1">
    <location>
        <begin position="65"/>
        <end position="104"/>
    </location>
</feature>
<feature type="disulfide bond" evidence="1">
    <location>
        <begin position="78"/>
        <end position="112"/>
    </location>
</feature>
<feature type="splice variant" id="VSP_060826" description="In isoform 2.">
    <original>GDASGGSTNKIAASMVLLGLVASLF</original>
    <variation>I</variation>
    <location>
        <begin position="115"/>
        <end position="139"/>
    </location>
</feature>
<accession>O49645</accession>
<accession>Q9SUV7</accession>
<dbReference type="EMBL" id="AL021635">
    <property type="protein sequence ID" value="CAA16549.1"/>
    <property type="molecule type" value="Genomic_DNA"/>
</dbReference>
<dbReference type="EMBL" id="AL033545">
    <property type="protein sequence ID" value="CAA22169.1"/>
    <property type="molecule type" value="Genomic_DNA"/>
</dbReference>
<dbReference type="EMBL" id="AL161557">
    <property type="protein sequence ID" value="CAB79219.1"/>
    <property type="molecule type" value="Genomic_DNA"/>
</dbReference>
<dbReference type="EMBL" id="CP002687">
    <property type="protein sequence ID" value="AEE84633.1"/>
    <property type="molecule type" value="Genomic_DNA"/>
</dbReference>
<dbReference type="EMBL" id="CP002687">
    <property type="protein sequence ID" value="ANM66157.1"/>
    <property type="molecule type" value="Genomic_DNA"/>
</dbReference>
<dbReference type="EMBL" id="BT010802">
    <property type="protein sequence ID" value="AAR24169.1"/>
    <property type="molecule type" value="mRNA"/>
</dbReference>
<dbReference type="EMBL" id="BT011284">
    <property type="protein sequence ID" value="AAR92320.1"/>
    <property type="molecule type" value="mRNA"/>
</dbReference>
<dbReference type="PIR" id="C85259">
    <property type="entry name" value="C85259"/>
</dbReference>
<dbReference type="PIR" id="T04559">
    <property type="entry name" value="T04559"/>
</dbReference>
<dbReference type="RefSeq" id="NP_001328070.1">
    <molecule id="O49645-1"/>
    <property type="nucleotide sequence ID" value="NM_001341557.1"/>
</dbReference>
<dbReference type="RefSeq" id="NP_193995.1">
    <molecule id="O49645-2"/>
    <property type="nucleotide sequence ID" value="NM_118390.3"/>
</dbReference>
<dbReference type="GlyCosmos" id="O49645">
    <property type="glycosylation" value="1 site, No reported glycans"/>
</dbReference>
<dbReference type="GlyGen" id="O49645">
    <property type="glycosylation" value="1 site"/>
</dbReference>
<dbReference type="PaxDb" id="3702-AT4G22640.1"/>
<dbReference type="ProteomicsDB" id="185213">
    <molecule id="O49645-1"/>
</dbReference>
<dbReference type="ProteomicsDB" id="193665"/>
<dbReference type="EnsemblPlants" id="AT4G22640.1">
    <molecule id="O49645-2"/>
    <property type="protein sequence ID" value="AT4G22640.1"/>
    <property type="gene ID" value="AT4G22640"/>
</dbReference>
<dbReference type="EnsemblPlants" id="AT4G22640.2">
    <molecule id="O49645-1"/>
    <property type="protein sequence ID" value="AT4G22640.2"/>
    <property type="gene ID" value="AT4G22640"/>
</dbReference>
<dbReference type="GeneID" id="828360"/>
<dbReference type="Gramene" id="AT4G22640.1">
    <molecule id="O49645-2"/>
    <property type="protein sequence ID" value="AT4G22640.1"/>
    <property type="gene ID" value="AT4G22640"/>
</dbReference>
<dbReference type="Gramene" id="AT4G22640.2">
    <molecule id="O49645-1"/>
    <property type="protein sequence ID" value="AT4G22640.2"/>
    <property type="gene ID" value="AT4G22640"/>
</dbReference>
<dbReference type="KEGG" id="ath:AT4G22640"/>
<dbReference type="Araport" id="AT4G22640"/>
<dbReference type="TAIR" id="AT4G22640"/>
<dbReference type="HOGENOM" id="CLU_138794_0_0_1"/>
<dbReference type="InParanoid" id="O49645"/>
<dbReference type="OMA" id="VYHNDCG"/>
<dbReference type="OrthoDB" id="1111683at2759"/>
<dbReference type="PRO" id="PR:O49645"/>
<dbReference type="Proteomes" id="UP000006548">
    <property type="component" value="Chromosome 4"/>
</dbReference>
<dbReference type="ExpressionAtlas" id="O49645">
    <property type="expression patterns" value="baseline and differential"/>
</dbReference>
<dbReference type="GO" id="GO:0005886">
    <property type="term" value="C:plasma membrane"/>
    <property type="evidence" value="ECO:0007669"/>
    <property type="project" value="UniProtKB-SubCell"/>
</dbReference>
<dbReference type="GO" id="GO:0098552">
    <property type="term" value="C:side of membrane"/>
    <property type="evidence" value="ECO:0007669"/>
    <property type="project" value="UniProtKB-KW"/>
</dbReference>
<dbReference type="InterPro" id="IPR036312">
    <property type="entry name" value="Bifun_inhib/LTP/seed_sf"/>
</dbReference>
<dbReference type="InterPro" id="IPR016140">
    <property type="entry name" value="Bifunc_inhib/LTP/seed_store"/>
</dbReference>
<dbReference type="Pfam" id="PF14368">
    <property type="entry name" value="LTP_2"/>
    <property type="match status" value="1"/>
</dbReference>
<dbReference type="SUPFAM" id="SSF47699">
    <property type="entry name" value="Bifunctional inhibitor/lipid-transfer protein/seed storage 2S albumin"/>
    <property type="match status" value="1"/>
</dbReference>
<comment type="function">
    <text evidence="2">Probable lipid transfer protein.</text>
</comment>
<comment type="subcellular location">
    <subcellularLocation>
        <location evidence="3">Cell membrane</location>
        <topology evidence="3">Lipid-anchor</topology>
        <topology evidence="3">GPI-anchor</topology>
    </subcellularLocation>
</comment>
<comment type="alternative products">
    <event type="alternative splicing"/>
    <isoform>
        <id>O49645-1</id>
        <name>1</name>
        <sequence type="displayed"/>
    </isoform>
    <isoform>
        <id>O49645-2</id>
        <name>2</name>
        <sequence type="described" ref="VSP_060826"/>
    </isoform>
</comment>
<comment type="similarity">
    <text evidence="6">Belongs to the plant LTP family.</text>
</comment>
<proteinExistence type="evidence at transcript level"/>
<gene>
    <name evidence="5" type="primary">LTPG33</name>
    <name evidence="7" type="ordered locus">At4g22640</name>
    <name evidence="8" type="ORF">T12H17.30</name>
</gene>
<sequence length="140" mass="14753">MAYTNKVTISAAVATMMLFLAVTIVDAQSMPPMPKFNPVCALADLPNIVQLCYFNLDLTPSEECCNDLKSSSTIQVNCLCDNFIAHPSNGNISQARYDLVNSACGVADKFACKGGDASGGSTNKIAASMVLLGLVASLFF</sequence>
<organism>
    <name type="scientific">Arabidopsis thaliana</name>
    <name type="common">Mouse-ear cress</name>
    <dbReference type="NCBI Taxonomy" id="3702"/>
    <lineage>
        <taxon>Eukaryota</taxon>
        <taxon>Viridiplantae</taxon>
        <taxon>Streptophyta</taxon>
        <taxon>Embryophyta</taxon>
        <taxon>Tracheophyta</taxon>
        <taxon>Spermatophyta</taxon>
        <taxon>Magnoliopsida</taxon>
        <taxon>eudicotyledons</taxon>
        <taxon>Gunneridae</taxon>
        <taxon>Pentapetalae</taxon>
        <taxon>rosids</taxon>
        <taxon>malvids</taxon>
        <taxon>Brassicales</taxon>
        <taxon>Brassicaceae</taxon>
        <taxon>Camelineae</taxon>
        <taxon>Arabidopsis</taxon>
    </lineage>
</organism>
<keyword id="KW-0025">Alternative splicing</keyword>
<keyword id="KW-1003">Cell membrane</keyword>
<keyword id="KW-1015">Disulfide bond</keyword>
<keyword id="KW-0325">Glycoprotein</keyword>
<keyword id="KW-0336">GPI-anchor</keyword>
<keyword id="KW-0449">Lipoprotein</keyword>
<keyword id="KW-0472">Membrane</keyword>
<keyword id="KW-1185">Reference proteome</keyword>
<keyword id="KW-0732">Signal</keyword>
<name>LTG33_ARATH</name>
<protein>
    <recommendedName>
        <fullName evidence="5">Non-specific lipid transfer protein GPI-anchored 33</fullName>
        <shortName evidence="5">AtLTPG-33</shortName>
        <shortName evidence="5">Protein LTP-GPI-ANCHORED 33</shortName>
    </recommendedName>
</protein>
<reference key="1">
    <citation type="journal article" date="1999" name="Nature">
        <title>Sequence and analysis of chromosome 4 of the plant Arabidopsis thaliana.</title>
        <authorList>
            <person name="Mayer K.F.X."/>
            <person name="Schueller C."/>
            <person name="Wambutt R."/>
            <person name="Murphy G."/>
            <person name="Volckaert G."/>
            <person name="Pohl T."/>
            <person name="Duesterhoeft A."/>
            <person name="Stiekema W."/>
            <person name="Entian K.-D."/>
            <person name="Terryn N."/>
            <person name="Harris B."/>
            <person name="Ansorge W."/>
            <person name="Brandt P."/>
            <person name="Grivell L.A."/>
            <person name="Rieger M."/>
            <person name="Weichselgartner M."/>
            <person name="de Simone V."/>
            <person name="Obermaier B."/>
            <person name="Mache R."/>
            <person name="Mueller M."/>
            <person name="Kreis M."/>
            <person name="Delseny M."/>
            <person name="Puigdomenech P."/>
            <person name="Watson M."/>
            <person name="Schmidtheini T."/>
            <person name="Reichert B."/>
            <person name="Portetelle D."/>
            <person name="Perez-Alonso M."/>
            <person name="Boutry M."/>
            <person name="Bancroft I."/>
            <person name="Vos P."/>
            <person name="Hoheisel J."/>
            <person name="Zimmermann W."/>
            <person name="Wedler H."/>
            <person name="Ridley P."/>
            <person name="Langham S.-A."/>
            <person name="McCullagh B."/>
            <person name="Bilham L."/>
            <person name="Robben J."/>
            <person name="van der Schueren J."/>
            <person name="Grymonprez B."/>
            <person name="Chuang Y.-J."/>
            <person name="Vandenbussche F."/>
            <person name="Braeken M."/>
            <person name="Weltjens I."/>
            <person name="Voet M."/>
            <person name="Bastiaens I."/>
            <person name="Aert R."/>
            <person name="Defoor E."/>
            <person name="Weitzenegger T."/>
            <person name="Bothe G."/>
            <person name="Ramsperger U."/>
            <person name="Hilbert H."/>
            <person name="Braun M."/>
            <person name="Holzer E."/>
            <person name="Brandt A."/>
            <person name="Peters S."/>
            <person name="van Staveren M."/>
            <person name="Dirkse W."/>
            <person name="Mooijman P."/>
            <person name="Klein Lankhorst R."/>
            <person name="Rose M."/>
            <person name="Hauf J."/>
            <person name="Koetter P."/>
            <person name="Berneiser S."/>
            <person name="Hempel S."/>
            <person name="Feldpausch M."/>
            <person name="Lamberth S."/>
            <person name="Van den Daele H."/>
            <person name="De Keyser A."/>
            <person name="Buysshaert C."/>
            <person name="Gielen J."/>
            <person name="Villarroel R."/>
            <person name="De Clercq R."/>
            <person name="van Montagu M."/>
            <person name="Rogers J."/>
            <person name="Cronin A."/>
            <person name="Quail M.A."/>
            <person name="Bray-Allen S."/>
            <person name="Clark L."/>
            <person name="Doggett J."/>
            <person name="Hall S."/>
            <person name="Kay M."/>
            <person name="Lennard N."/>
            <person name="McLay K."/>
            <person name="Mayes R."/>
            <person name="Pettett A."/>
            <person name="Rajandream M.A."/>
            <person name="Lyne M."/>
            <person name="Benes V."/>
            <person name="Rechmann S."/>
            <person name="Borkova D."/>
            <person name="Bloecker H."/>
            <person name="Scharfe M."/>
            <person name="Grimm M."/>
            <person name="Loehnert T.-H."/>
            <person name="Dose S."/>
            <person name="de Haan M."/>
            <person name="Maarse A.C."/>
            <person name="Schaefer M."/>
            <person name="Mueller-Auer S."/>
            <person name="Gabel C."/>
            <person name="Fuchs M."/>
            <person name="Fartmann B."/>
            <person name="Granderath K."/>
            <person name="Dauner D."/>
            <person name="Herzl A."/>
            <person name="Neumann S."/>
            <person name="Argiriou A."/>
            <person name="Vitale D."/>
            <person name="Liguori R."/>
            <person name="Piravandi E."/>
            <person name="Massenet O."/>
            <person name="Quigley F."/>
            <person name="Clabauld G."/>
            <person name="Muendlein A."/>
            <person name="Felber R."/>
            <person name="Schnabl S."/>
            <person name="Hiller R."/>
            <person name="Schmidt W."/>
            <person name="Lecharny A."/>
            <person name="Aubourg S."/>
            <person name="Chefdor F."/>
            <person name="Cooke R."/>
            <person name="Berger C."/>
            <person name="Monfort A."/>
            <person name="Casacuberta E."/>
            <person name="Gibbons T."/>
            <person name="Weber N."/>
            <person name="Vandenbol M."/>
            <person name="Bargues M."/>
            <person name="Terol J."/>
            <person name="Torres A."/>
            <person name="Perez-Perez A."/>
            <person name="Purnelle B."/>
            <person name="Bent E."/>
            <person name="Johnson S."/>
            <person name="Tacon D."/>
            <person name="Jesse T."/>
            <person name="Heijnen L."/>
            <person name="Schwarz S."/>
            <person name="Scholler P."/>
            <person name="Heber S."/>
            <person name="Francs P."/>
            <person name="Bielke C."/>
            <person name="Frishman D."/>
            <person name="Haase D."/>
            <person name="Lemcke K."/>
            <person name="Mewes H.-W."/>
            <person name="Stocker S."/>
            <person name="Zaccaria P."/>
            <person name="Bevan M."/>
            <person name="Wilson R.K."/>
            <person name="de la Bastide M."/>
            <person name="Habermann K."/>
            <person name="Parnell L."/>
            <person name="Dedhia N."/>
            <person name="Gnoj L."/>
            <person name="Schutz K."/>
            <person name="Huang E."/>
            <person name="Spiegel L."/>
            <person name="Sekhon M."/>
            <person name="Murray J."/>
            <person name="Sheet P."/>
            <person name="Cordes M."/>
            <person name="Abu-Threideh J."/>
            <person name="Stoneking T."/>
            <person name="Kalicki J."/>
            <person name="Graves T."/>
            <person name="Harmon G."/>
            <person name="Edwards J."/>
            <person name="Latreille P."/>
            <person name="Courtney L."/>
            <person name="Cloud J."/>
            <person name="Abbott A."/>
            <person name="Scott K."/>
            <person name="Johnson D."/>
            <person name="Minx P."/>
            <person name="Bentley D."/>
            <person name="Fulton B."/>
            <person name="Miller N."/>
            <person name="Greco T."/>
            <person name="Kemp K."/>
            <person name="Kramer J."/>
            <person name="Fulton L."/>
            <person name="Mardis E."/>
            <person name="Dante M."/>
            <person name="Pepin K."/>
            <person name="Hillier L.W."/>
            <person name="Nelson J."/>
            <person name="Spieth J."/>
            <person name="Ryan E."/>
            <person name="Andrews S."/>
            <person name="Geisel C."/>
            <person name="Layman D."/>
            <person name="Du H."/>
            <person name="Ali J."/>
            <person name="Berghoff A."/>
            <person name="Jones K."/>
            <person name="Drone K."/>
            <person name="Cotton M."/>
            <person name="Joshu C."/>
            <person name="Antonoiu B."/>
            <person name="Zidanic M."/>
            <person name="Strong C."/>
            <person name="Sun H."/>
            <person name="Lamar B."/>
            <person name="Yordan C."/>
            <person name="Ma P."/>
            <person name="Zhong J."/>
            <person name="Preston R."/>
            <person name="Vil D."/>
            <person name="Shekher M."/>
            <person name="Matero A."/>
            <person name="Shah R."/>
            <person name="Swaby I.K."/>
            <person name="O'Shaughnessy A."/>
            <person name="Rodriguez M."/>
            <person name="Hoffman J."/>
            <person name="Till S."/>
            <person name="Granat S."/>
            <person name="Shohdy N."/>
            <person name="Hasegawa A."/>
            <person name="Hameed A."/>
            <person name="Lodhi M."/>
            <person name="Johnson A."/>
            <person name="Chen E."/>
            <person name="Marra M.A."/>
            <person name="Martienssen R."/>
            <person name="McCombie W.R."/>
        </authorList>
    </citation>
    <scope>NUCLEOTIDE SEQUENCE [LARGE SCALE GENOMIC DNA]</scope>
    <source>
        <strain>cv. Columbia</strain>
    </source>
</reference>
<reference key="2">
    <citation type="journal article" date="2017" name="Plant J.">
        <title>Araport11: a complete reannotation of the Arabidopsis thaliana reference genome.</title>
        <authorList>
            <person name="Cheng C.Y."/>
            <person name="Krishnakumar V."/>
            <person name="Chan A.P."/>
            <person name="Thibaud-Nissen F."/>
            <person name="Schobel S."/>
            <person name="Town C.D."/>
        </authorList>
    </citation>
    <scope>GENOME REANNOTATION</scope>
    <source>
        <strain>cv. Columbia</strain>
    </source>
</reference>
<reference key="3">
    <citation type="submission" date="2004-01" db="EMBL/GenBank/DDBJ databases">
        <title>Arabidopsis ORF clones.</title>
        <authorList>
            <person name="Cheuk R.F."/>
            <person name="Chen H."/>
            <person name="Kim C.J."/>
            <person name="Shinn P."/>
            <person name="Ecker J.R."/>
        </authorList>
    </citation>
    <scope>NUCLEOTIDE SEQUENCE [LARGE SCALE MRNA] (ISOFORM 2)</scope>
    <source>
        <strain>cv. Columbia</strain>
    </source>
</reference>
<reference key="4">
    <citation type="journal article" date="2013" name="Plant Mol. Biol.">
        <title>Coexpression patterns indicate that GPI-anchored non-specific lipid transfer proteins are involved in accumulation of cuticular wax, suberin and sporopollenin.</title>
        <authorList>
            <person name="Edstam M.M."/>
            <person name="Blomqvist K."/>
            <person name="Ekloef A."/>
            <person name="Wennergren U."/>
            <person name="Edqvist J."/>
        </authorList>
    </citation>
    <scope>GENE FAMILY</scope>
    <scope>NOMENCLATURE</scope>
    <source>
        <strain>cv. Columbia</strain>
    </source>
</reference>